<sequence length="599" mass="68946">MTDLTAQELAQPSWQTRDHQDDPVIGELRNRFGPDAFTVQATRTGVPVVWVKREQLLEIVEFLRKLPKPYVMLYDLHGMDERLRTHRAGLPAADFSVFYHFISIERNRDIMLKVALSENDLHVPTLTKIFPNANWYERETWEMFGIDVVGHPHLTRIMMPQTWEGHPLRKDYPARATEFDPFELTKQKEDLEMESLTFKPEDWGMKRSTANEDFMFLNLGPNHPSAHGAFRIILQLDGEEIVDCVPDIGYHHRGAEKMGERQSWHSYIPYTDRIEYLGGCVNEMPYVLAVEKLAGIKVPERVEVIRVMLSELFRINSHLLYISTFIQDVGAMSPVFFAFTDRQKIYDVVEAITGFRMHPAWFRIGGVAHDLPKGWERLLREFLDWMPKRLKAYEQTALKNSVLIGRAKGVSAYNMEEALAWGTTGAGLRATGLDFDVRKWRPYSGYENFDFEIPIGDGVSCAYSRVMLKMEEMRQSMRILEQCLNNMPAGPFKADHPLTTPPPKERTLQHIETLITHFLQVSWGPVMPANESFQMIEATKGINSYYLTSDGSTMSYRTRVRTPSFPHLQQIPSVINGSLVSDLIVYLGSIDFVMSDVDR</sequence>
<dbReference type="EC" id="7.1.1.-" evidence="1"/>
<dbReference type="EMBL" id="CU468135">
    <property type="protein sequence ID" value="CAO96252.1"/>
    <property type="molecule type" value="Genomic_DNA"/>
</dbReference>
<dbReference type="SMR" id="B2VIV5"/>
<dbReference type="STRING" id="465817.ETA_12060"/>
<dbReference type="KEGG" id="eta:ETA_12060"/>
<dbReference type="eggNOG" id="COG0649">
    <property type="taxonomic scope" value="Bacteria"/>
</dbReference>
<dbReference type="eggNOG" id="COG0852">
    <property type="taxonomic scope" value="Bacteria"/>
</dbReference>
<dbReference type="HOGENOM" id="CLU_015134_3_2_6"/>
<dbReference type="OrthoDB" id="9801496at2"/>
<dbReference type="Proteomes" id="UP000001726">
    <property type="component" value="Chromosome"/>
</dbReference>
<dbReference type="GO" id="GO:0030964">
    <property type="term" value="C:NADH dehydrogenase complex"/>
    <property type="evidence" value="ECO:0007669"/>
    <property type="project" value="InterPro"/>
</dbReference>
<dbReference type="GO" id="GO:0005886">
    <property type="term" value="C:plasma membrane"/>
    <property type="evidence" value="ECO:0007669"/>
    <property type="project" value="UniProtKB-SubCell"/>
</dbReference>
<dbReference type="GO" id="GO:0051287">
    <property type="term" value="F:NAD binding"/>
    <property type="evidence" value="ECO:0007669"/>
    <property type="project" value="InterPro"/>
</dbReference>
<dbReference type="GO" id="GO:0008137">
    <property type="term" value="F:NADH dehydrogenase (ubiquinone) activity"/>
    <property type="evidence" value="ECO:0007669"/>
    <property type="project" value="InterPro"/>
</dbReference>
<dbReference type="GO" id="GO:0050136">
    <property type="term" value="F:NADH:ubiquinone reductase (non-electrogenic) activity"/>
    <property type="evidence" value="ECO:0007669"/>
    <property type="project" value="UniProtKB-UniRule"/>
</dbReference>
<dbReference type="GO" id="GO:0048038">
    <property type="term" value="F:quinone binding"/>
    <property type="evidence" value="ECO:0007669"/>
    <property type="project" value="UniProtKB-KW"/>
</dbReference>
<dbReference type="FunFam" id="1.10.645.10:FF:000001">
    <property type="entry name" value="NADH-quinone oxidoreductase subunit C/D"/>
    <property type="match status" value="1"/>
</dbReference>
<dbReference type="FunFam" id="3.30.460.80:FF:000001">
    <property type="entry name" value="NADH-quinone oxidoreductase subunit C/D"/>
    <property type="match status" value="1"/>
</dbReference>
<dbReference type="Gene3D" id="1.10.645.10">
    <property type="entry name" value="Cytochrome-c3 Hydrogenase, chain B"/>
    <property type="match status" value="1"/>
</dbReference>
<dbReference type="Gene3D" id="3.30.460.80">
    <property type="entry name" value="NADH:ubiquinone oxidoreductase, 30kDa subunit"/>
    <property type="match status" value="1"/>
</dbReference>
<dbReference type="HAMAP" id="MF_01359">
    <property type="entry name" value="NDH1_NuoCD_1"/>
    <property type="match status" value="1"/>
</dbReference>
<dbReference type="HAMAP" id="MF_01358">
    <property type="entry name" value="NDH1_NuoD"/>
    <property type="match status" value="1"/>
</dbReference>
<dbReference type="InterPro" id="IPR010218">
    <property type="entry name" value="NADH_DH_suC"/>
</dbReference>
<dbReference type="InterPro" id="IPR023062">
    <property type="entry name" value="NADH_DH_suCD"/>
</dbReference>
<dbReference type="InterPro" id="IPR001135">
    <property type="entry name" value="NADH_Q_OxRdtase_suD"/>
</dbReference>
<dbReference type="InterPro" id="IPR037232">
    <property type="entry name" value="NADH_quin_OxRdtase_su_C/D-like"/>
</dbReference>
<dbReference type="InterPro" id="IPR001268">
    <property type="entry name" value="NADH_UbQ_OxRdtase_30kDa_su"/>
</dbReference>
<dbReference type="InterPro" id="IPR014029">
    <property type="entry name" value="NADH_UbQ_OxRdtase_49kDa_CS"/>
</dbReference>
<dbReference type="InterPro" id="IPR022885">
    <property type="entry name" value="NDH1_su_D/H"/>
</dbReference>
<dbReference type="InterPro" id="IPR029014">
    <property type="entry name" value="NiFe-Hase_large"/>
</dbReference>
<dbReference type="NCBIfam" id="TIGR01961">
    <property type="entry name" value="NuoC_fam"/>
    <property type="match status" value="1"/>
</dbReference>
<dbReference type="NCBIfam" id="TIGR01962">
    <property type="entry name" value="NuoD"/>
    <property type="match status" value="1"/>
</dbReference>
<dbReference type="NCBIfam" id="NF004739">
    <property type="entry name" value="PRK06075.1"/>
    <property type="match status" value="1"/>
</dbReference>
<dbReference type="NCBIfam" id="NF008728">
    <property type="entry name" value="PRK11742.1"/>
    <property type="match status" value="1"/>
</dbReference>
<dbReference type="PANTHER" id="PTHR11993:SF45">
    <property type="entry name" value="NADH-QUINONE OXIDOREDUCTASE SUBUNIT C_D"/>
    <property type="match status" value="1"/>
</dbReference>
<dbReference type="PANTHER" id="PTHR11993">
    <property type="entry name" value="NADH-UBIQUINONE OXIDOREDUCTASE 49 KDA SUBUNIT"/>
    <property type="match status" value="1"/>
</dbReference>
<dbReference type="Pfam" id="PF00329">
    <property type="entry name" value="Complex1_30kDa"/>
    <property type="match status" value="1"/>
</dbReference>
<dbReference type="Pfam" id="PF00346">
    <property type="entry name" value="Complex1_49kDa"/>
    <property type="match status" value="1"/>
</dbReference>
<dbReference type="SUPFAM" id="SSF56762">
    <property type="entry name" value="HydB/Nqo4-like"/>
    <property type="match status" value="1"/>
</dbReference>
<dbReference type="SUPFAM" id="SSF143243">
    <property type="entry name" value="Nqo5-like"/>
    <property type="match status" value="1"/>
</dbReference>
<dbReference type="PROSITE" id="PS00535">
    <property type="entry name" value="COMPLEX1_49K"/>
    <property type="match status" value="1"/>
</dbReference>
<keyword id="KW-0997">Cell inner membrane</keyword>
<keyword id="KW-1003">Cell membrane</keyword>
<keyword id="KW-0472">Membrane</keyword>
<keyword id="KW-0511">Multifunctional enzyme</keyword>
<keyword id="KW-0520">NAD</keyword>
<keyword id="KW-0874">Quinone</keyword>
<keyword id="KW-1185">Reference proteome</keyword>
<keyword id="KW-1278">Translocase</keyword>
<keyword id="KW-0813">Transport</keyword>
<keyword id="KW-0830">Ubiquinone</keyword>
<evidence type="ECO:0000255" key="1">
    <source>
        <dbReference type="HAMAP-Rule" id="MF_01359"/>
    </source>
</evidence>
<evidence type="ECO:0000256" key="2">
    <source>
        <dbReference type="SAM" id="MobiDB-lite"/>
    </source>
</evidence>
<accession>B2VIV5</accession>
<feature type="chain" id="PRO_0000358631" description="NADH-quinone oxidoreductase subunit C/D">
    <location>
        <begin position="1"/>
        <end position="599"/>
    </location>
</feature>
<feature type="region of interest" description="NADH dehydrogenase I subunit C" evidence="1">
    <location>
        <begin position="1"/>
        <end position="189"/>
    </location>
</feature>
<feature type="region of interest" description="Disordered" evidence="2">
    <location>
        <begin position="1"/>
        <end position="21"/>
    </location>
</feature>
<feature type="region of interest" description="NADH dehydrogenase I subunit D" evidence="1">
    <location>
        <begin position="213"/>
        <end position="599"/>
    </location>
</feature>
<feature type="compositionally biased region" description="Polar residues" evidence="2">
    <location>
        <begin position="1"/>
        <end position="15"/>
    </location>
</feature>
<protein>
    <recommendedName>
        <fullName evidence="1">NADH-quinone oxidoreductase subunit C/D</fullName>
        <ecNumber evidence="1">7.1.1.-</ecNumber>
    </recommendedName>
    <alternativeName>
        <fullName evidence="1">NADH dehydrogenase I subunit C/D</fullName>
    </alternativeName>
    <alternativeName>
        <fullName evidence="1">NDH-1 subunit C/D</fullName>
    </alternativeName>
</protein>
<reference key="1">
    <citation type="journal article" date="2008" name="Environ. Microbiol.">
        <title>The genome of Erwinia tasmaniensis strain Et1/99, a non-pathogenic bacterium in the genus Erwinia.</title>
        <authorList>
            <person name="Kube M."/>
            <person name="Migdoll A.M."/>
            <person name="Mueller I."/>
            <person name="Kuhl H."/>
            <person name="Beck A."/>
            <person name="Reinhardt R."/>
            <person name="Geider K."/>
        </authorList>
    </citation>
    <scope>NUCLEOTIDE SEQUENCE [LARGE SCALE GENOMIC DNA]</scope>
    <source>
        <strain>DSM 17950 / CFBP 7177 / CIP 109463 / NCPPB 4357 / Et1/99</strain>
    </source>
</reference>
<organism>
    <name type="scientific">Erwinia tasmaniensis (strain DSM 17950 / CFBP 7177 / CIP 109463 / NCPPB 4357 / Et1/99)</name>
    <dbReference type="NCBI Taxonomy" id="465817"/>
    <lineage>
        <taxon>Bacteria</taxon>
        <taxon>Pseudomonadati</taxon>
        <taxon>Pseudomonadota</taxon>
        <taxon>Gammaproteobacteria</taxon>
        <taxon>Enterobacterales</taxon>
        <taxon>Erwiniaceae</taxon>
        <taxon>Erwinia</taxon>
    </lineage>
</organism>
<name>NUOCD_ERWT9</name>
<gene>
    <name evidence="1" type="primary">nuoC</name>
    <name evidence="1" type="synonym">nuoCD</name>
    <name evidence="1" type="synonym">nuoD</name>
    <name type="ordered locus">ETA_12060</name>
</gene>
<proteinExistence type="inferred from homology"/>
<comment type="function">
    <text evidence="1">NDH-1 shuttles electrons from NADH, via FMN and iron-sulfur (Fe-S) centers, to quinones in the respiratory chain. The immediate electron acceptor for the enzyme in this species is believed to be ubiquinone. Couples the redox reaction to proton translocation (for every two electrons transferred, four hydrogen ions are translocated across the cytoplasmic membrane), and thus conserves the redox energy in a proton gradient.</text>
</comment>
<comment type="catalytic activity">
    <reaction evidence="1">
        <text>a quinone + NADH + 5 H(+)(in) = a quinol + NAD(+) + 4 H(+)(out)</text>
        <dbReference type="Rhea" id="RHEA:57888"/>
        <dbReference type="ChEBI" id="CHEBI:15378"/>
        <dbReference type="ChEBI" id="CHEBI:24646"/>
        <dbReference type="ChEBI" id="CHEBI:57540"/>
        <dbReference type="ChEBI" id="CHEBI:57945"/>
        <dbReference type="ChEBI" id="CHEBI:132124"/>
    </reaction>
</comment>
<comment type="subunit">
    <text evidence="1">NDH-1 is composed of 13 different subunits. Subunits NuoB, CD, E, F, and G constitute the peripheral sector of the complex.</text>
</comment>
<comment type="subcellular location">
    <subcellularLocation>
        <location evidence="1">Cell inner membrane</location>
        <topology evidence="1">Peripheral membrane protein</topology>
        <orientation evidence="1">Cytoplasmic side</orientation>
    </subcellularLocation>
</comment>
<comment type="similarity">
    <text evidence="1">In the N-terminal section; belongs to the complex I 30 kDa subunit family.</text>
</comment>
<comment type="similarity">
    <text evidence="1">In the C-terminal section; belongs to the complex I 49 kDa subunit family.</text>
</comment>